<keyword id="KW-0227">DNA damage</keyword>
<keyword id="KW-0233">DNA recombination</keyword>
<keyword id="KW-0234">DNA repair</keyword>
<sequence length="243" mass="27543">MQITLPGVVLTNSPAEKQHVIVKIFSPAGLLSAFAKNGASLSCDFRESLFPISFSLFTIQQSPPKMRKVIQGELQNPFTTIKSSYPLLQSAGKMIQAILKTQWHEKPSPHLFSLFFNFLQRIPETQYPNFFSSMFLLKLLQHEGSLDLSRSCTLCKTSLESSTIYRYEGALFCEKHAHEETISFSQEEDHILRVIVQAKKFQELVCLAEFPIDIDTKIDALFSSFLSETSEPSSLYYKGKTLL</sequence>
<reference key="1">
    <citation type="journal article" date="2008" name="Genome Res.">
        <title>Chlamydia trachomatis: genome sequence analysis of lymphogranuloma venereum isolates.</title>
        <authorList>
            <person name="Thomson N.R."/>
            <person name="Holden M.T.G."/>
            <person name="Carder C."/>
            <person name="Lennard N."/>
            <person name="Lockey S.J."/>
            <person name="Marsh P."/>
            <person name="Skipp P."/>
            <person name="O'Connor C.D."/>
            <person name="Goodhead I."/>
            <person name="Norbertzcak H."/>
            <person name="Harris B."/>
            <person name="Ormond D."/>
            <person name="Rance R."/>
            <person name="Quail M.A."/>
            <person name="Parkhill J."/>
            <person name="Stephens R.S."/>
            <person name="Clarke I.N."/>
        </authorList>
    </citation>
    <scope>NUCLEOTIDE SEQUENCE [LARGE SCALE GENOMIC DNA]</scope>
    <source>
        <strain>ATCC VR-902B / DSM 19102 / 434/Bu</strain>
    </source>
</reference>
<comment type="function">
    <text evidence="1">Involved in DNA repair and RecF pathway recombination.</text>
</comment>
<comment type="similarity">
    <text evidence="1">Belongs to the RecO family.</text>
</comment>
<gene>
    <name evidence="1" type="primary">recO</name>
    <name type="ordered locus">CTL0730</name>
</gene>
<name>RECO_CHLT2</name>
<evidence type="ECO:0000255" key="1">
    <source>
        <dbReference type="HAMAP-Rule" id="MF_00201"/>
    </source>
</evidence>
<feature type="chain" id="PRO_1000099372" description="DNA repair protein RecO">
    <location>
        <begin position="1"/>
        <end position="243"/>
    </location>
</feature>
<dbReference type="EMBL" id="AM884176">
    <property type="protein sequence ID" value="CAP04169.1"/>
    <property type="molecule type" value="Genomic_DNA"/>
</dbReference>
<dbReference type="RefSeq" id="WP_009873835.1">
    <property type="nucleotide sequence ID" value="NC_010287.1"/>
</dbReference>
<dbReference type="RefSeq" id="YP_001654802.1">
    <property type="nucleotide sequence ID" value="NC_010287.1"/>
</dbReference>
<dbReference type="SMR" id="B0B843"/>
<dbReference type="KEGG" id="ctb:CTL0730"/>
<dbReference type="PATRIC" id="fig|471472.4.peg.783"/>
<dbReference type="HOGENOM" id="CLU_1122990_0_0_0"/>
<dbReference type="Proteomes" id="UP001154402">
    <property type="component" value="Chromosome"/>
</dbReference>
<dbReference type="GO" id="GO:0043590">
    <property type="term" value="C:bacterial nucleoid"/>
    <property type="evidence" value="ECO:0007669"/>
    <property type="project" value="TreeGrafter"/>
</dbReference>
<dbReference type="GO" id="GO:0006310">
    <property type="term" value="P:DNA recombination"/>
    <property type="evidence" value="ECO:0007669"/>
    <property type="project" value="UniProtKB-UniRule"/>
</dbReference>
<dbReference type="GO" id="GO:0006302">
    <property type="term" value="P:double-strand break repair"/>
    <property type="evidence" value="ECO:0007669"/>
    <property type="project" value="TreeGrafter"/>
</dbReference>
<dbReference type="HAMAP" id="MF_00201">
    <property type="entry name" value="RecO"/>
    <property type="match status" value="1"/>
</dbReference>
<dbReference type="InterPro" id="IPR037278">
    <property type="entry name" value="ARFGAP/RecO"/>
</dbReference>
<dbReference type="InterPro" id="IPR012340">
    <property type="entry name" value="NA-bd_OB-fold"/>
</dbReference>
<dbReference type="InterPro" id="IPR003717">
    <property type="entry name" value="RecO"/>
</dbReference>
<dbReference type="NCBIfam" id="TIGR00613">
    <property type="entry name" value="reco"/>
    <property type="match status" value="1"/>
</dbReference>
<dbReference type="PANTHER" id="PTHR33991">
    <property type="entry name" value="DNA REPAIR PROTEIN RECO"/>
    <property type="match status" value="1"/>
</dbReference>
<dbReference type="PANTHER" id="PTHR33991:SF1">
    <property type="entry name" value="DNA REPAIR PROTEIN RECO"/>
    <property type="match status" value="1"/>
</dbReference>
<dbReference type="Pfam" id="PF02565">
    <property type="entry name" value="RecO_C"/>
    <property type="match status" value="1"/>
</dbReference>
<dbReference type="SUPFAM" id="SSF57863">
    <property type="entry name" value="ArfGap/RecO-like zinc finger"/>
    <property type="match status" value="1"/>
</dbReference>
<dbReference type="SUPFAM" id="SSF50249">
    <property type="entry name" value="Nucleic acid-binding proteins"/>
    <property type="match status" value="1"/>
</dbReference>
<proteinExistence type="inferred from homology"/>
<organism>
    <name type="scientific">Chlamydia trachomatis serovar L2 (strain ATCC VR-902B / DSM 19102 / 434/Bu)</name>
    <dbReference type="NCBI Taxonomy" id="471472"/>
    <lineage>
        <taxon>Bacteria</taxon>
        <taxon>Pseudomonadati</taxon>
        <taxon>Chlamydiota</taxon>
        <taxon>Chlamydiia</taxon>
        <taxon>Chlamydiales</taxon>
        <taxon>Chlamydiaceae</taxon>
        <taxon>Chlamydia/Chlamydophila group</taxon>
        <taxon>Chlamydia</taxon>
    </lineage>
</organism>
<protein>
    <recommendedName>
        <fullName evidence="1">DNA repair protein RecO</fullName>
    </recommendedName>
    <alternativeName>
        <fullName evidence="1">Recombination protein O</fullName>
    </alternativeName>
</protein>
<accession>B0B843</accession>